<organism>
    <name type="scientific">Homo sapiens</name>
    <name type="common">Human</name>
    <dbReference type="NCBI Taxonomy" id="9606"/>
    <lineage>
        <taxon>Eukaryota</taxon>
        <taxon>Metazoa</taxon>
        <taxon>Chordata</taxon>
        <taxon>Craniata</taxon>
        <taxon>Vertebrata</taxon>
        <taxon>Euteleostomi</taxon>
        <taxon>Mammalia</taxon>
        <taxon>Eutheria</taxon>
        <taxon>Euarchontoglires</taxon>
        <taxon>Primates</taxon>
        <taxon>Haplorrhini</taxon>
        <taxon>Catarrhini</taxon>
        <taxon>Hominidae</taxon>
        <taxon>Homo</taxon>
    </lineage>
</organism>
<dbReference type="EMBL" id="AY358260">
    <property type="protein sequence ID" value="AAQ88627.1"/>
    <property type="molecule type" value="mRNA"/>
</dbReference>
<dbReference type="EMBL" id="CH471052">
    <property type="protein sequence ID" value="EAW78784.1"/>
    <property type="molecule type" value="Genomic_DNA"/>
</dbReference>
<dbReference type="GlyGen" id="Q6UXP3">
    <property type="glycosylation" value="1 site, 1 O-linked glycan (1 site)"/>
</dbReference>
<dbReference type="BioMuta" id="HGNC:34386"/>
<dbReference type="DMDM" id="74738233"/>
<dbReference type="PaxDb" id="9606-ENSP00000386163"/>
<dbReference type="PeptideAtlas" id="Q6UXP3"/>
<dbReference type="UCSC" id="uc010hvo.4">
    <property type="organism name" value="human"/>
</dbReference>
<dbReference type="AGR" id="HGNC:34386"/>
<dbReference type="GeneCards" id="TMEM14EP"/>
<dbReference type="HGNC" id="HGNC:34386">
    <property type="gene designation" value="TMEM14EP"/>
</dbReference>
<dbReference type="neXtProt" id="NX_Q6UXP3"/>
<dbReference type="PharmGKB" id="PA162405891"/>
<dbReference type="eggNOG" id="KOG4267">
    <property type="taxonomic scope" value="Eukaryota"/>
</dbReference>
<dbReference type="HOGENOM" id="CLU_162780_0_0_1"/>
<dbReference type="InParanoid" id="Q6UXP3"/>
<dbReference type="PAN-GO" id="Q6UXP3">
    <property type="GO annotations" value="2 GO annotations based on evolutionary models"/>
</dbReference>
<dbReference type="PhylomeDB" id="Q6UXP3"/>
<dbReference type="PathwayCommons" id="Q6UXP3"/>
<dbReference type="Pharos" id="Q6UXP3">
    <property type="development level" value="Tdark"/>
</dbReference>
<dbReference type="PRO" id="PR:Q6UXP3"/>
<dbReference type="Proteomes" id="UP000005640">
    <property type="component" value="Unplaced"/>
</dbReference>
<dbReference type="RNAct" id="Q6UXP3">
    <property type="molecule type" value="protein"/>
</dbReference>
<dbReference type="GO" id="GO:0031966">
    <property type="term" value="C:mitochondrial membrane"/>
    <property type="evidence" value="ECO:0000318"/>
    <property type="project" value="GO_Central"/>
</dbReference>
<dbReference type="GO" id="GO:0070453">
    <property type="term" value="P:regulation of heme biosynthetic process"/>
    <property type="evidence" value="ECO:0000318"/>
    <property type="project" value="GO_Central"/>
</dbReference>
<dbReference type="Gene3D" id="1.10.10.1740">
    <property type="entry name" value="Transmembrane protein 14-like"/>
    <property type="match status" value="1"/>
</dbReference>
<dbReference type="InterPro" id="IPR005349">
    <property type="entry name" value="TMEM14"/>
</dbReference>
<dbReference type="InterPro" id="IPR044890">
    <property type="entry name" value="TMEM14_sf"/>
</dbReference>
<dbReference type="Pfam" id="PF03647">
    <property type="entry name" value="Tmemb_14"/>
    <property type="match status" value="1"/>
</dbReference>
<keyword id="KW-0472">Membrane</keyword>
<keyword id="KW-1185">Reference proteome</keyword>
<keyword id="KW-0812">Transmembrane</keyword>
<keyword id="KW-1133">Transmembrane helix</keyword>
<protein>
    <recommendedName>
        <fullName>Transmembrane protein 14EP</fullName>
    </recommendedName>
</protein>
<evidence type="ECO:0000255" key="1"/>
<evidence type="ECO:0000305" key="2"/>
<reference key="1">
    <citation type="journal article" date="2003" name="Genome Res.">
        <title>The secreted protein discovery initiative (SPDI), a large-scale effort to identify novel human secreted and transmembrane proteins: a bioinformatics assessment.</title>
        <authorList>
            <person name="Clark H.F."/>
            <person name="Gurney A.L."/>
            <person name="Abaya E."/>
            <person name="Baker K."/>
            <person name="Baldwin D.T."/>
            <person name="Brush J."/>
            <person name="Chen J."/>
            <person name="Chow B."/>
            <person name="Chui C."/>
            <person name="Crowley C."/>
            <person name="Currell B."/>
            <person name="Deuel B."/>
            <person name="Dowd P."/>
            <person name="Eaton D."/>
            <person name="Foster J.S."/>
            <person name="Grimaldi C."/>
            <person name="Gu Q."/>
            <person name="Hass P.E."/>
            <person name="Heldens S."/>
            <person name="Huang A."/>
            <person name="Kim H.S."/>
            <person name="Klimowski L."/>
            <person name="Jin Y."/>
            <person name="Johnson S."/>
            <person name="Lee J."/>
            <person name="Lewis L."/>
            <person name="Liao D."/>
            <person name="Mark M.R."/>
            <person name="Robbie E."/>
            <person name="Sanchez C."/>
            <person name="Schoenfeld J."/>
            <person name="Seshagiri S."/>
            <person name="Simmons L."/>
            <person name="Singh J."/>
            <person name="Smith V."/>
            <person name="Stinson J."/>
            <person name="Vagts A."/>
            <person name="Vandlen R.L."/>
            <person name="Watanabe C."/>
            <person name="Wieand D."/>
            <person name="Woods K."/>
            <person name="Xie M.-H."/>
            <person name="Yansura D.G."/>
            <person name="Yi S."/>
            <person name="Yu G."/>
            <person name="Yuan J."/>
            <person name="Zhang M."/>
            <person name="Zhang Z."/>
            <person name="Goddard A.D."/>
            <person name="Wood W.I."/>
            <person name="Godowski P.J."/>
            <person name="Gray A.M."/>
        </authorList>
    </citation>
    <scope>NUCLEOTIDE SEQUENCE [LARGE SCALE MRNA]</scope>
</reference>
<reference key="2">
    <citation type="submission" date="2005-09" db="EMBL/GenBank/DDBJ databases">
        <authorList>
            <person name="Mural R.J."/>
            <person name="Istrail S."/>
            <person name="Sutton G.G."/>
            <person name="Florea L."/>
            <person name="Halpern A.L."/>
            <person name="Mobarry C.M."/>
            <person name="Lippert R."/>
            <person name="Walenz B."/>
            <person name="Shatkay H."/>
            <person name="Dew I."/>
            <person name="Miller J.R."/>
            <person name="Flanigan M.J."/>
            <person name="Edwards N.J."/>
            <person name="Bolanos R."/>
            <person name="Fasulo D."/>
            <person name="Halldorsson B.V."/>
            <person name="Hannenhalli S."/>
            <person name="Turner R."/>
            <person name="Yooseph S."/>
            <person name="Lu F."/>
            <person name="Nusskern D.R."/>
            <person name="Shue B.C."/>
            <person name="Zheng X.H."/>
            <person name="Zhong F."/>
            <person name="Delcher A.L."/>
            <person name="Huson D.H."/>
            <person name="Kravitz S.A."/>
            <person name="Mouchard L."/>
            <person name="Reinert K."/>
            <person name="Remington K.A."/>
            <person name="Clark A.G."/>
            <person name="Waterman M.S."/>
            <person name="Eichler E.E."/>
            <person name="Adams M.D."/>
            <person name="Hunkapiller M.W."/>
            <person name="Myers E.W."/>
            <person name="Venter J.C."/>
        </authorList>
    </citation>
    <scope>NUCLEOTIDE SEQUENCE [LARGE SCALE GENOMIC DNA]</scope>
</reference>
<gene>
    <name type="primary">TMEM14EP</name>
    <name type="synonym">TMEM14E</name>
    <name type="ORF">UNQ9344/PRO34067</name>
</gene>
<feature type="chain" id="PRO_0000348435" description="Transmembrane protein 14EP">
    <location>
        <begin position="1"/>
        <end position="125"/>
    </location>
</feature>
<feature type="transmembrane region" description="Helical" evidence="1">
    <location>
        <begin position="9"/>
        <end position="29"/>
    </location>
</feature>
<feature type="transmembrane region" description="Helical" evidence="1">
    <location>
        <begin position="81"/>
        <end position="101"/>
    </location>
</feature>
<feature type="sequence variant" id="VAR_046161" description="In dbSNP:rs13077912.">
    <original>L</original>
    <variation>P</variation>
    <location>
        <position position="82"/>
    </location>
</feature>
<sequence>MQMDPGPQVPLYWLGFVYAALAALGGISGYAKVGSVQSPSAGFFFSELAGLDASQPSRNPKEHLSSPVYIWDLARYYANKILTLWNIYACGFSCRCLLIVSKLGSMYGEQILSVVAMSQLGLMKN</sequence>
<proteinExistence type="uncertain"/>
<name>TM14E_HUMAN</name>
<accession>Q6UXP3</accession>
<comment type="subcellular location">
    <subcellularLocation>
        <location evidence="2">Membrane</location>
        <topology evidence="2">Multi-pass membrane protein</topology>
    </subcellularLocation>
</comment>
<comment type="similarity">
    <text evidence="2">Belongs to the TMEM14 family.</text>
</comment>
<comment type="caution">
    <text evidence="2">Could be the product of a pseudogene.</text>
</comment>